<gene>
    <name evidence="1" type="primary">aroQ</name>
    <name type="ordered locus">BT_0132</name>
</gene>
<organism>
    <name type="scientific">Bartonella tribocorum (strain CIP 105476 / IBS 506)</name>
    <dbReference type="NCBI Taxonomy" id="382640"/>
    <lineage>
        <taxon>Bacteria</taxon>
        <taxon>Pseudomonadati</taxon>
        <taxon>Pseudomonadota</taxon>
        <taxon>Alphaproteobacteria</taxon>
        <taxon>Hyphomicrobiales</taxon>
        <taxon>Bartonellaceae</taxon>
        <taxon>Bartonella</taxon>
    </lineage>
</organism>
<protein>
    <recommendedName>
        <fullName evidence="1">3-dehydroquinate dehydratase</fullName>
        <shortName evidence="1">3-dehydroquinase</shortName>
        <ecNumber evidence="1">4.2.1.10</ecNumber>
    </recommendedName>
    <alternativeName>
        <fullName evidence="1">Type II DHQase</fullName>
    </alternativeName>
</protein>
<keyword id="KW-0028">Amino-acid biosynthesis</keyword>
<keyword id="KW-0057">Aromatic amino acid biosynthesis</keyword>
<keyword id="KW-0456">Lyase</keyword>
<evidence type="ECO:0000255" key="1">
    <source>
        <dbReference type="HAMAP-Rule" id="MF_00169"/>
    </source>
</evidence>
<sequence length="149" mass="16840">MSVMITILNGPNLNFLGQREPKIYGTETLEDIEKNCREWAKRADVIINFYQSNYEGQLVEWIQEAIGLSSGLIINPAAYSHTSVALLDALKMFSGPKVEVHLSHIYRREAFRHHSYTSIGVDAIISGCGSDGYRFALEYIAKQLINCKR</sequence>
<feature type="chain" id="PRO_1000077027" description="3-dehydroquinate dehydratase">
    <location>
        <begin position="1"/>
        <end position="149"/>
    </location>
</feature>
<feature type="active site" description="Proton acceptor" evidence="1">
    <location>
        <position position="24"/>
    </location>
</feature>
<feature type="active site" description="Proton donor" evidence="1">
    <location>
        <position position="101"/>
    </location>
</feature>
<feature type="binding site" evidence="1">
    <location>
        <position position="75"/>
    </location>
    <ligand>
        <name>substrate</name>
    </ligand>
</feature>
<feature type="binding site" evidence="1">
    <location>
        <position position="81"/>
    </location>
    <ligand>
        <name>substrate</name>
    </ligand>
</feature>
<feature type="binding site" evidence="1">
    <location>
        <position position="88"/>
    </location>
    <ligand>
        <name>substrate</name>
    </ligand>
</feature>
<feature type="binding site" evidence="1">
    <location>
        <begin position="102"/>
        <end position="103"/>
    </location>
    <ligand>
        <name>substrate</name>
    </ligand>
</feature>
<feature type="binding site" evidence="1">
    <location>
        <position position="112"/>
    </location>
    <ligand>
        <name>substrate</name>
    </ligand>
</feature>
<feature type="site" description="Transition state stabilizer" evidence="1">
    <location>
        <position position="19"/>
    </location>
</feature>
<comment type="function">
    <text evidence="1">Catalyzes a trans-dehydration via an enolate intermediate.</text>
</comment>
<comment type="catalytic activity">
    <reaction evidence="1">
        <text>3-dehydroquinate = 3-dehydroshikimate + H2O</text>
        <dbReference type="Rhea" id="RHEA:21096"/>
        <dbReference type="ChEBI" id="CHEBI:15377"/>
        <dbReference type="ChEBI" id="CHEBI:16630"/>
        <dbReference type="ChEBI" id="CHEBI:32364"/>
        <dbReference type="EC" id="4.2.1.10"/>
    </reaction>
</comment>
<comment type="pathway">
    <text evidence="1">Metabolic intermediate biosynthesis; chorismate biosynthesis; chorismate from D-erythrose 4-phosphate and phosphoenolpyruvate: step 3/7.</text>
</comment>
<comment type="subunit">
    <text evidence="1">Homododecamer.</text>
</comment>
<comment type="similarity">
    <text evidence="1">Belongs to the type-II 3-dehydroquinase family.</text>
</comment>
<name>AROQ_BART1</name>
<dbReference type="EC" id="4.2.1.10" evidence="1"/>
<dbReference type="EMBL" id="AM260525">
    <property type="protein sequence ID" value="CAK00620.1"/>
    <property type="molecule type" value="Genomic_DNA"/>
</dbReference>
<dbReference type="RefSeq" id="WP_012230455.1">
    <property type="nucleotide sequence ID" value="NC_010161.1"/>
</dbReference>
<dbReference type="SMR" id="A9IM00"/>
<dbReference type="KEGG" id="btr:BT_0132"/>
<dbReference type="eggNOG" id="COG0757">
    <property type="taxonomic scope" value="Bacteria"/>
</dbReference>
<dbReference type="HOGENOM" id="CLU_090968_2_0_5"/>
<dbReference type="UniPathway" id="UPA00053">
    <property type="reaction ID" value="UER00086"/>
</dbReference>
<dbReference type="Proteomes" id="UP000001592">
    <property type="component" value="Chromosome"/>
</dbReference>
<dbReference type="GO" id="GO:0003855">
    <property type="term" value="F:3-dehydroquinate dehydratase activity"/>
    <property type="evidence" value="ECO:0007669"/>
    <property type="project" value="UniProtKB-UniRule"/>
</dbReference>
<dbReference type="GO" id="GO:0008652">
    <property type="term" value="P:amino acid biosynthetic process"/>
    <property type="evidence" value="ECO:0007669"/>
    <property type="project" value="UniProtKB-KW"/>
</dbReference>
<dbReference type="GO" id="GO:0009073">
    <property type="term" value="P:aromatic amino acid family biosynthetic process"/>
    <property type="evidence" value="ECO:0007669"/>
    <property type="project" value="UniProtKB-KW"/>
</dbReference>
<dbReference type="GO" id="GO:0009423">
    <property type="term" value="P:chorismate biosynthetic process"/>
    <property type="evidence" value="ECO:0007669"/>
    <property type="project" value="UniProtKB-UniRule"/>
</dbReference>
<dbReference type="GO" id="GO:0019631">
    <property type="term" value="P:quinate catabolic process"/>
    <property type="evidence" value="ECO:0007669"/>
    <property type="project" value="TreeGrafter"/>
</dbReference>
<dbReference type="CDD" id="cd00466">
    <property type="entry name" value="DHQase_II"/>
    <property type="match status" value="1"/>
</dbReference>
<dbReference type="Gene3D" id="3.40.50.9100">
    <property type="entry name" value="Dehydroquinase, class II"/>
    <property type="match status" value="1"/>
</dbReference>
<dbReference type="HAMAP" id="MF_00169">
    <property type="entry name" value="AroQ"/>
    <property type="match status" value="1"/>
</dbReference>
<dbReference type="InterPro" id="IPR001874">
    <property type="entry name" value="DHquinase_II"/>
</dbReference>
<dbReference type="InterPro" id="IPR018509">
    <property type="entry name" value="DHquinase_II_CS"/>
</dbReference>
<dbReference type="InterPro" id="IPR036441">
    <property type="entry name" value="DHquinase_II_sf"/>
</dbReference>
<dbReference type="NCBIfam" id="TIGR01088">
    <property type="entry name" value="aroQ"/>
    <property type="match status" value="1"/>
</dbReference>
<dbReference type="NCBIfam" id="NF003805">
    <property type="entry name" value="PRK05395.1-2"/>
    <property type="match status" value="1"/>
</dbReference>
<dbReference type="NCBIfam" id="NF003806">
    <property type="entry name" value="PRK05395.1-3"/>
    <property type="match status" value="1"/>
</dbReference>
<dbReference type="NCBIfam" id="NF003807">
    <property type="entry name" value="PRK05395.1-4"/>
    <property type="match status" value="1"/>
</dbReference>
<dbReference type="PANTHER" id="PTHR21272">
    <property type="entry name" value="CATABOLIC 3-DEHYDROQUINASE"/>
    <property type="match status" value="1"/>
</dbReference>
<dbReference type="PANTHER" id="PTHR21272:SF3">
    <property type="entry name" value="CATABOLIC 3-DEHYDROQUINASE"/>
    <property type="match status" value="1"/>
</dbReference>
<dbReference type="Pfam" id="PF01220">
    <property type="entry name" value="DHquinase_II"/>
    <property type="match status" value="1"/>
</dbReference>
<dbReference type="PIRSF" id="PIRSF001399">
    <property type="entry name" value="DHquinase_II"/>
    <property type="match status" value="1"/>
</dbReference>
<dbReference type="SUPFAM" id="SSF52304">
    <property type="entry name" value="Type II 3-dehydroquinate dehydratase"/>
    <property type="match status" value="1"/>
</dbReference>
<dbReference type="PROSITE" id="PS01029">
    <property type="entry name" value="DEHYDROQUINASE_II"/>
    <property type="match status" value="1"/>
</dbReference>
<accession>A9IM00</accession>
<proteinExistence type="inferred from homology"/>
<reference key="1">
    <citation type="journal article" date="2007" name="Nat. Genet.">
        <title>Genomic analysis of Bartonella identifies type IV secretion systems as host adaptability factors.</title>
        <authorList>
            <person name="Saenz H.L."/>
            <person name="Engel P."/>
            <person name="Stoeckli M.C."/>
            <person name="Lanz C."/>
            <person name="Raddatz G."/>
            <person name="Vayssier-Taussat M."/>
            <person name="Birtles R."/>
            <person name="Schuster S.C."/>
            <person name="Dehio C."/>
        </authorList>
    </citation>
    <scope>NUCLEOTIDE SEQUENCE [LARGE SCALE GENOMIC DNA]</scope>
    <source>
        <strain>CIP 105476 / IBS 506</strain>
    </source>
</reference>